<name>MATK_PRUDU</name>
<evidence type="ECO:0000255" key="1">
    <source>
        <dbReference type="HAMAP-Rule" id="MF_01390"/>
    </source>
</evidence>
<reference key="1">
    <citation type="submission" date="2000-07" db="EMBL/GenBank/DDBJ databases">
        <title>Phylogenetic relationships among putative genes encoding polygalacturonase inhibitor proteins (PGIPs) in Rosaceae.</title>
        <authorList>
            <person name="Potter D."/>
            <person name="Gao F."/>
            <person name="Oh S.-H."/>
            <person name="Baggett S."/>
        </authorList>
    </citation>
    <scope>NUCLEOTIDE SEQUENCE [GENOMIC DNA]</scope>
</reference>
<keyword id="KW-0150">Chloroplast</keyword>
<keyword id="KW-0507">mRNA processing</keyword>
<keyword id="KW-0934">Plastid</keyword>
<keyword id="KW-0694">RNA-binding</keyword>
<keyword id="KW-0819">tRNA processing</keyword>
<proteinExistence type="inferred from homology"/>
<feature type="chain" id="PRO_0000143652" description="Maturase K">
    <location>
        <begin position="1"/>
        <end position="506"/>
    </location>
</feature>
<protein>
    <recommendedName>
        <fullName evidence="1">Maturase K</fullName>
    </recommendedName>
    <alternativeName>
        <fullName evidence="1">Intron maturase</fullName>
    </alternativeName>
</protein>
<geneLocation type="chloroplast"/>
<sequence>MEEFQGYLELDRYQQHDFLYPLIFREYIYALAHDHGLNRSILLDNVGYDNKSSLLIIKRLISRMYKQNHFFISANDSNQKKKLGYNKNLYSQKISEGFTVIVEISFSLQLVSSLEATKTVKSYNLRSIHSIFPFLEDKFPHLNYVSDVLIPYPIHLEILVQTLRYWVKDASSLHLLRLFLHEYYNWNSLITSNNFFFSKSNPRLFLLLYNSHVCEYEFILLFLRNQSSHLQLTSSGIFFERIHFYEKIKYPVEEVFANDFPASILWFFKDPFMHYVRYQGKSILASKDTPLLMNKWKYYLVNLWQCHSYVWSQPGRIYINKLSKHSLDFLGYFSSIRPNLSVVRSQMLENSFITDNAMKKLDTLVPIIPLIGSLAKVKFCNALGHPISKSTWADSSDFDIIDRFLRICRNLSHYYSGSSRKKSLYRIKYILRLSCLKTLARKHKSTVRTFLKRLGSKLLEEFFTEEEQILSLVFPRASYTFTFKKFYRGRIWYLDIFCINDLINYE</sequence>
<accession>Q8WJP3</accession>
<organism>
    <name type="scientific">Prunus dulcis</name>
    <name type="common">Almond</name>
    <name type="synonym">Amygdalus dulcis</name>
    <dbReference type="NCBI Taxonomy" id="3755"/>
    <lineage>
        <taxon>Eukaryota</taxon>
        <taxon>Viridiplantae</taxon>
        <taxon>Streptophyta</taxon>
        <taxon>Embryophyta</taxon>
        <taxon>Tracheophyta</taxon>
        <taxon>Spermatophyta</taxon>
        <taxon>Magnoliopsida</taxon>
        <taxon>eudicotyledons</taxon>
        <taxon>Gunneridae</taxon>
        <taxon>Pentapetalae</taxon>
        <taxon>rosids</taxon>
        <taxon>fabids</taxon>
        <taxon>Rosales</taxon>
        <taxon>Rosaceae</taxon>
        <taxon>Amygdaloideae</taxon>
        <taxon>Amygdaleae</taxon>
        <taxon>Prunus</taxon>
    </lineage>
</organism>
<comment type="function">
    <text evidence="1">Usually encoded in the trnK tRNA gene intron. Probably assists in splicing its own and other chloroplast group II introns.</text>
</comment>
<comment type="subcellular location">
    <subcellularLocation>
        <location>Plastid</location>
        <location>Chloroplast</location>
    </subcellularLocation>
</comment>
<comment type="similarity">
    <text evidence="1">Belongs to the intron maturase 2 family. MatK subfamily.</text>
</comment>
<dbReference type="EMBL" id="AF288115">
    <property type="protein sequence ID" value="AAL36009.1"/>
    <property type="molecule type" value="Genomic_DNA"/>
</dbReference>
<dbReference type="GO" id="GO:0009507">
    <property type="term" value="C:chloroplast"/>
    <property type="evidence" value="ECO:0007669"/>
    <property type="project" value="UniProtKB-SubCell"/>
</dbReference>
<dbReference type="GO" id="GO:0003723">
    <property type="term" value="F:RNA binding"/>
    <property type="evidence" value="ECO:0007669"/>
    <property type="project" value="UniProtKB-KW"/>
</dbReference>
<dbReference type="GO" id="GO:0006397">
    <property type="term" value="P:mRNA processing"/>
    <property type="evidence" value="ECO:0007669"/>
    <property type="project" value="UniProtKB-KW"/>
</dbReference>
<dbReference type="GO" id="GO:0008380">
    <property type="term" value="P:RNA splicing"/>
    <property type="evidence" value="ECO:0007669"/>
    <property type="project" value="UniProtKB-UniRule"/>
</dbReference>
<dbReference type="GO" id="GO:0008033">
    <property type="term" value="P:tRNA processing"/>
    <property type="evidence" value="ECO:0007669"/>
    <property type="project" value="UniProtKB-KW"/>
</dbReference>
<dbReference type="HAMAP" id="MF_01390">
    <property type="entry name" value="MatK"/>
    <property type="match status" value="1"/>
</dbReference>
<dbReference type="InterPro" id="IPR024937">
    <property type="entry name" value="Domain_X"/>
</dbReference>
<dbReference type="InterPro" id="IPR002866">
    <property type="entry name" value="Maturase_MatK"/>
</dbReference>
<dbReference type="InterPro" id="IPR024942">
    <property type="entry name" value="Maturase_MatK_N"/>
</dbReference>
<dbReference type="PANTHER" id="PTHR34811">
    <property type="entry name" value="MATURASE K"/>
    <property type="match status" value="1"/>
</dbReference>
<dbReference type="PANTHER" id="PTHR34811:SF1">
    <property type="entry name" value="MATURASE K"/>
    <property type="match status" value="1"/>
</dbReference>
<dbReference type="Pfam" id="PF01348">
    <property type="entry name" value="Intron_maturas2"/>
    <property type="match status" value="1"/>
</dbReference>
<dbReference type="Pfam" id="PF01824">
    <property type="entry name" value="MatK_N"/>
    <property type="match status" value="1"/>
</dbReference>
<gene>
    <name evidence="1" type="primary">matK</name>
</gene>